<organism>
    <name type="scientific">Yersinia pestis bv. Antiqua (strain Nepal516)</name>
    <dbReference type="NCBI Taxonomy" id="377628"/>
    <lineage>
        <taxon>Bacteria</taxon>
        <taxon>Pseudomonadati</taxon>
        <taxon>Pseudomonadota</taxon>
        <taxon>Gammaproteobacteria</taxon>
        <taxon>Enterobacterales</taxon>
        <taxon>Yersiniaceae</taxon>
        <taxon>Yersinia</taxon>
    </lineage>
</organism>
<sequence>MSQVILDLQIACADSQGLPTEGDFQRWLEAVLPLFQPVSEVTIRLVDEAESHDLNLTYRGKDKSTNVLSFPFEAPPEIELPLLGDLIICRQVVEKEAIEQEKALLAHWAHMVVHGSLHLLGYDHIDDEEAEEMELIETEIMHGLGYPDPYISEKDPD</sequence>
<name>YBEY_YERPN</name>
<feature type="chain" id="PRO_0000284353" description="Endoribonuclease YbeY">
    <location>
        <begin position="1"/>
        <end position="157"/>
    </location>
</feature>
<feature type="binding site" evidence="1">
    <location>
        <position position="114"/>
    </location>
    <ligand>
        <name>Zn(2+)</name>
        <dbReference type="ChEBI" id="CHEBI:29105"/>
        <note>catalytic</note>
    </ligand>
</feature>
<feature type="binding site" evidence="1">
    <location>
        <position position="118"/>
    </location>
    <ligand>
        <name>Zn(2+)</name>
        <dbReference type="ChEBI" id="CHEBI:29105"/>
        <note>catalytic</note>
    </ligand>
</feature>
<feature type="binding site" evidence="1">
    <location>
        <position position="124"/>
    </location>
    <ligand>
        <name>Zn(2+)</name>
        <dbReference type="ChEBI" id="CHEBI:29105"/>
        <note>catalytic</note>
    </ligand>
</feature>
<proteinExistence type="inferred from homology"/>
<dbReference type="EC" id="3.1.-.-" evidence="1"/>
<dbReference type="EMBL" id="CP000305">
    <property type="protein sequence ID" value="ABG17435.1"/>
    <property type="molecule type" value="Genomic_DNA"/>
</dbReference>
<dbReference type="EMBL" id="ACNQ01000008">
    <property type="protein sequence ID" value="EEO77529.1"/>
    <property type="molecule type" value="Genomic_DNA"/>
</dbReference>
<dbReference type="RefSeq" id="WP_002210344.1">
    <property type="nucleotide sequence ID" value="NZ_ACNQ01000008.1"/>
</dbReference>
<dbReference type="SMR" id="Q1CKP5"/>
<dbReference type="GeneID" id="57976077"/>
<dbReference type="KEGG" id="ypn:YPN_1104"/>
<dbReference type="HOGENOM" id="CLU_106710_0_1_6"/>
<dbReference type="Proteomes" id="UP000008936">
    <property type="component" value="Chromosome"/>
</dbReference>
<dbReference type="GO" id="GO:0005737">
    <property type="term" value="C:cytoplasm"/>
    <property type="evidence" value="ECO:0007669"/>
    <property type="project" value="UniProtKB-SubCell"/>
</dbReference>
<dbReference type="GO" id="GO:0004222">
    <property type="term" value="F:metalloendopeptidase activity"/>
    <property type="evidence" value="ECO:0007669"/>
    <property type="project" value="InterPro"/>
</dbReference>
<dbReference type="GO" id="GO:0004521">
    <property type="term" value="F:RNA endonuclease activity"/>
    <property type="evidence" value="ECO:0007669"/>
    <property type="project" value="UniProtKB-UniRule"/>
</dbReference>
<dbReference type="GO" id="GO:0008270">
    <property type="term" value="F:zinc ion binding"/>
    <property type="evidence" value="ECO:0007669"/>
    <property type="project" value="UniProtKB-UniRule"/>
</dbReference>
<dbReference type="GO" id="GO:0006364">
    <property type="term" value="P:rRNA processing"/>
    <property type="evidence" value="ECO:0007669"/>
    <property type="project" value="UniProtKB-UniRule"/>
</dbReference>
<dbReference type="Gene3D" id="3.40.390.30">
    <property type="entry name" value="Metalloproteases ('zincins'), catalytic domain"/>
    <property type="match status" value="1"/>
</dbReference>
<dbReference type="HAMAP" id="MF_00009">
    <property type="entry name" value="Endoribonucl_YbeY"/>
    <property type="match status" value="1"/>
</dbReference>
<dbReference type="InterPro" id="IPR023091">
    <property type="entry name" value="MetalPrtase_cat_dom_sf_prd"/>
</dbReference>
<dbReference type="InterPro" id="IPR002036">
    <property type="entry name" value="YbeY"/>
</dbReference>
<dbReference type="InterPro" id="IPR020549">
    <property type="entry name" value="YbeY_CS"/>
</dbReference>
<dbReference type="NCBIfam" id="TIGR00043">
    <property type="entry name" value="rRNA maturation RNase YbeY"/>
    <property type="match status" value="1"/>
</dbReference>
<dbReference type="PANTHER" id="PTHR46986">
    <property type="entry name" value="ENDORIBONUCLEASE YBEY, CHLOROPLASTIC"/>
    <property type="match status" value="1"/>
</dbReference>
<dbReference type="PANTHER" id="PTHR46986:SF1">
    <property type="entry name" value="ENDORIBONUCLEASE YBEY, CHLOROPLASTIC"/>
    <property type="match status" value="1"/>
</dbReference>
<dbReference type="Pfam" id="PF02130">
    <property type="entry name" value="YbeY"/>
    <property type="match status" value="1"/>
</dbReference>
<dbReference type="SUPFAM" id="SSF55486">
    <property type="entry name" value="Metalloproteases ('zincins'), catalytic domain"/>
    <property type="match status" value="1"/>
</dbReference>
<dbReference type="PROSITE" id="PS01306">
    <property type="entry name" value="UPF0054"/>
    <property type="match status" value="1"/>
</dbReference>
<comment type="function">
    <text evidence="1">Single strand-specific metallo-endoribonuclease involved in late-stage 70S ribosome quality control and in maturation of the 3' terminus of the 16S rRNA.</text>
</comment>
<comment type="cofactor">
    <cofactor evidence="1">
        <name>Zn(2+)</name>
        <dbReference type="ChEBI" id="CHEBI:29105"/>
    </cofactor>
    <text evidence="1">Binds 1 zinc ion.</text>
</comment>
<comment type="subcellular location">
    <subcellularLocation>
        <location evidence="1">Cytoplasm</location>
    </subcellularLocation>
</comment>
<comment type="similarity">
    <text evidence="1">Belongs to the endoribonuclease YbeY family.</text>
</comment>
<keyword id="KW-0963">Cytoplasm</keyword>
<keyword id="KW-0255">Endonuclease</keyword>
<keyword id="KW-0378">Hydrolase</keyword>
<keyword id="KW-0479">Metal-binding</keyword>
<keyword id="KW-0540">Nuclease</keyword>
<keyword id="KW-0690">Ribosome biogenesis</keyword>
<keyword id="KW-0698">rRNA processing</keyword>
<keyword id="KW-0862">Zinc</keyword>
<accession>Q1CKP5</accession>
<accession>C4GR38</accession>
<reference key="1">
    <citation type="journal article" date="2006" name="J. Bacteriol.">
        <title>Complete genome sequence of Yersinia pestis strains Antiqua and Nepal516: evidence of gene reduction in an emerging pathogen.</title>
        <authorList>
            <person name="Chain P.S.G."/>
            <person name="Hu P."/>
            <person name="Malfatti S.A."/>
            <person name="Radnedge L."/>
            <person name="Larimer F."/>
            <person name="Vergez L.M."/>
            <person name="Worsham P."/>
            <person name="Chu M.C."/>
            <person name="Andersen G.L."/>
        </authorList>
    </citation>
    <scope>NUCLEOTIDE SEQUENCE [LARGE SCALE GENOMIC DNA]</scope>
    <source>
        <strain>Nepal516</strain>
    </source>
</reference>
<reference key="2">
    <citation type="submission" date="2009-04" db="EMBL/GenBank/DDBJ databases">
        <title>Yersinia pestis Nepal516A whole genome shotgun sequencing project.</title>
        <authorList>
            <person name="Plunkett G. III"/>
            <person name="Anderson B.D."/>
            <person name="Baumler D.J."/>
            <person name="Burland V."/>
            <person name="Cabot E.L."/>
            <person name="Glasner J.D."/>
            <person name="Mau B."/>
            <person name="Neeno-Eckwall E."/>
            <person name="Perna N.T."/>
            <person name="Munk A.C."/>
            <person name="Tapia R."/>
            <person name="Green L.D."/>
            <person name="Rogers Y.C."/>
            <person name="Detter J.C."/>
            <person name="Bruce D.C."/>
            <person name="Brettin T.S."/>
        </authorList>
    </citation>
    <scope>NUCLEOTIDE SEQUENCE [LARGE SCALE GENOMIC DNA]</scope>
    <source>
        <strain>Nepal516</strain>
    </source>
</reference>
<evidence type="ECO:0000255" key="1">
    <source>
        <dbReference type="HAMAP-Rule" id="MF_00009"/>
    </source>
</evidence>
<protein>
    <recommendedName>
        <fullName evidence="1">Endoribonuclease YbeY</fullName>
        <ecNumber evidence="1">3.1.-.-</ecNumber>
    </recommendedName>
</protein>
<gene>
    <name evidence="1" type="primary">ybeY</name>
    <name type="ordered locus">YPN_1104</name>
    <name type="ORF">YP516_1199</name>
</gene>